<protein>
    <recommendedName>
        <fullName>SCO2-like protein RC0042</fullName>
    </recommendedName>
</protein>
<sequence length="199" mass="23101">MRNNKNQMYIIKIFIALAMITGIIFLCLLYSSLTPSKLKIGVKTSNMDDSPKIKFTLIDQEGKKFDSTHLQGHLSLIYFGTTYSLYDNQTLKRVEDIIKILKKENILVQVVFITLDSEHDTSEVLKKYLEKIDDNFIGLTGRVEDIEQLADQFKVFFYTSKIFDVKTNKYELQHSNFVYLISSQGKFLKHYYLGLPKNG</sequence>
<organism>
    <name type="scientific">Rickettsia conorii (strain ATCC VR-613 / Malish 7)</name>
    <dbReference type="NCBI Taxonomy" id="272944"/>
    <lineage>
        <taxon>Bacteria</taxon>
        <taxon>Pseudomonadati</taxon>
        <taxon>Pseudomonadota</taxon>
        <taxon>Alphaproteobacteria</taxon>
        <taxon>Rickettsiales</taxon>
        <taxon>Rickettsiaceae</taxon>
        <taxon>Rickettsieae</taxon>
        <taxon>Rickettsia</taxon>
        <taxon>spotted fever group</taxon>
    </lineage>
</organism>
<evidence type="ECO:0000305" key="1"/>
<reference key="1">
    <citation type="journal article" date="2001" name="Science">
        <title>Mechanisms of evolution in Rickettsia conorii and R. prowazekii.</title>
        <authorList>
            <person name="Ogata H."/>
            <person name="Audic S."/>
            <person name="Renesto-Audiffren P."/>
            <person name="Fournier P.-E."/>
            <person name="Barbe V."/>
            <person name="Samson D."/>
            <person name="Roux V."/>
            <person name="Cossart P."/>
            <person name="Weissenbach J."/>
            <person name="Claverie J.-M."/>
            <person name="Raoult D."/>
        </authorList>
    </citation>
    <scope>NUCLEOTIDE SEQUENCE [LARGE SCALE GENOMIC DNA]</scope>
    <source>
        <strain>ATCC VR-613 / Malish 7</strain>
    </source>
</reference>
<comment type="similarity">
    <text evidence="1">Belongs to the SCO1/2 family.</text>
</comment>
<accession>Q92JM5</accession>
<dbReference type="EMBL" id="AE006914">
    <property type="protein sequence ID" value="AAL02580.1"/>
    <property type="molecule type" value="Genomic_DNA"/>
</dbReference>
<dbReference type="PIR" id="B97705">
    <property type="entry name" value="B97705"/>
</dbReference>
<dbReference type="RefSeq" id="WP_010976729.1">
    <property type="nucleotide sequence ID" value="NC_003103.1"/>
</dbReference>
<dbReference type="SMR" id="Q92JM5"/>
<dbReference type="GeneID" id="928623"/>
<dbReference type="KEGG" id="rco:RC0042"/>
<dbReference type="PATRIC" id="fig|272944.4.peg.52"/>
<dbReference type="HOGENOM" id="CLU_050131_6_0_5"/>
<dbReference type="Proteomes" id="UP000000816">
    <property type="component" value="Chromosome"/>
</dbReference>
<dbReference type="CDD" id="cd02968">
    <property type="entry name" value="SCO"/>
    <property type="match status" value="1"/>
</dbReference>
<dbReference type="Gene3D" id="3.40.30.10">
    <property type="entry name" value="Glutaredoxin"/>
    <property type="match status" value="1"/>
</dbReference>
<dbReference type="InterPro" id="IPR003782">
    <property type="entry name" value="SCO1/SenC"/>
</dbReference>
<dbReference type="InterPro" id="IPR036249">
    <property type="entry name" value="Thioredoxin-like_sf"/>
</dbReference>
<dbReference type="PANTHER" id="PTHR12151">
    <property type="entry name" value="ELECTRON TRANSPORT PROTIN SCO1/SENC FAMILY MEMBER"/>
    <property type="match status" value="1"/>
</dbReference>
<dbReference type="PANTHER" id="PTHR12151:SF25">
    <property type="entry name" value="LINALOOL DEHYDRATASE_ISOMERASE DOMAIN-CONTAINING PROTEIN"/>
    <property type="match status" value="1"/>
</dbReference>
<dbReference type="Pfam" id="PF02630">
    <property type="entry name" value="SCO1-SenC"/>
    <property type="match status" value="1"/>
</dbReference>
<dbReference type="SUPFAM" id="SSF52833">
    <property type="entry name" value="Thioredoxin-like"/>
    <property type="match status" value="1"/>
</dbReference>
<gene>
    <name type="ordered locus">RC0042</name>
</gene>
<name>SCO21_RICCN</name>
<proteinExistence type="inferred from homology"/>
<feature type="chain" id="PRO_0000173877" description="SCO2-like protein RC0042">
    <location>
        <begin position="1"/>
        <end position="199"/>
    </location>
</feature>